<organism>
    <name type="scientific">Renibacterium salmoninarum (strain ATCC 33209 / DSM 20767 / JCM 11484 / NBRC 15589 / NCIMB 2235)</name>
    <dbReference type="NCBI Taxonomy" id="288705"/>
    <lineage>
        <taxon>Bacteria</taxon>
        <taxon>Bacillati</taxon>
        <taxon>Actinomycetota</taxon>
        <taxon>Actinomycetes</taxon>
        <taxon>Micrococcales</taxon>
        <taxon>Micrococcaceae</taxon>
        <taxon>Renibacterium</taxon>
    </lineage>
</organism>
<proteinExistence type="inferred from homology"/>
<reference key="1">
    <citation type="journal article" date="2008" name="J. Bacteriol.">
        <title>Genome sequence of the fish pathogen Renibacterium salmoninarum suggests reductive evolution away from an environmental Arthrobacter ancestor.</title>
        <authorList>
            <person name="Wiens G.D."/>
            <person name="Rockey D.D."/>
            <person name="Wu Z."/>
            <person name="Chang J."/>
            <person name="Levy R."/>
            <person name="Crane S."/>
            <person name="Chen D.S."/>
            <person name="Capri G.R."/>
            <person name="Burnett J.R."/>
            <person name="Sudheesh P.S."/>
            <person name="Schipma M.J."/>
            <person name="Burd H."/>
            <person name="Bhattacharyya A."/>
            <person name="Rhodes L.D."/>
            <person name="Kaul R."/>
            <person name="Strom M.S."/>
        </authorList>
    </citation>
    <scope>NUCLEOTIDE SEQUENCE [LARGE SCALE GENOMIC DNA]</scope>
    <source>
        <strain>ATCC 33209 / DSM 20767 / JCM 11484 / NBRC 15589 / NCIMB 2235</strain>
    </source>
</reference>
<dbReference type="EMBL" id="CP000910">
    <property type="protein sequence ID" value="ABY25233.1"/>
    <property type="molecule type" value="Genomic_DNA"/>
</dbReference>
<dbReference type="RefSeq" id="WP_012246859.1">
    <property type="nucleotide sequence ID" value="NC_010168.1"/>
</dbReference>
<dbReference type="SMR" id="A9WVL2"/>
<dbReference type="STRING" id="288705.RSal33209_3524"/>
<dbReference type="KEGG" id="rsa:RSal33209_3524"/>
<dbReference type="eggNOG" id="COG0359">
    <property type="taxonomic scope" value="Bacteria"/>
</dbReference>
<dbReference type="HOGENOM" id="CLU_078938_5_1_11"/>
<dbReference type="Proteomes" id="UP000002007">
    <property type="component" value="Chromosome"/>
</dbReference>
<dbReference type="GO" id="GO:1990904">
    <property type="term" value="C:ribonucleoprotein complex"/>
    <property type="evidence" value="ECO:0007669"/>
    <property type="project" value="UniProtKB-KW"/>
</dbReference>
<dbReference type="GO" id="GO:0005840">
    <property type="term" value="C:ribosome"/>
    <property type="evidence" value="ECO:0007669"/>
    <property type="project" value="UniProtKB-KW"/>
</dbReference>
<dbReference type="GO" id="GO:0019843">
    <property type="term" value="F:rRNA binding"/>
    <property type="evidence" value="ECO:0007669"/>
    <property type="project" value="UniProtKB-UniRule"/>
</dbReference>
<dbReference type="GO" id="GO:0003735">
    <property type="term" value="F:structural constituent of ribosome"/>
    <property type="evidence" value="ECO:0007669"/>
    <property type="project" value="InterPro"/>
</dbReference>
<dbReference type="GO" id="GO:0006412">
    <property type="term" value="P:translation"/>
    <property type="evidence" value="ECO:0007669"/>
    <property type="project" value="UniProtKB-UniRule"/>
</dbReference>
<dbReference type="FunFam" id="3.40.5.10:FF:000003">
    <property type="entry name" value="50S ribosomal protein L9"/>
    <property type="match status" value="1"/>
</dbReference>
<dbReference type="Gene3D" id="3.10.430.100">
    <property type="entry name" value="Ribosomal protein L9, C-terminal domain"/>
    <property type="match status" value="1"/>
</dbReference>
<dbReference type="Gene3D" id="3.40.5.10">
    <property type="entry name" value="Ribosomal protein L9, N-terminal domain"/>
    <property type="match status" value="1"/>
</dbReference>
<dbReference type="HAMAP" id="MF_00503">
    <property type="entry name" value="Ribosomal_bL9"/>
    <property type="match status" value="1"/>
</dbReference>
<dbReference type="InterPro" id="IPR000244">
    <property type="entry name" value="Ribosomal_bL9"/>
</dbReference>
<dbReference type="InterPro" id="IPR009027">
    <property type="entry name" value="Ribosomal_bL9/RNase_H1_N"/>
</dbReference>
<dbReference type="InterPro" id="IPR020594">
    <property type="entry name" value="Ribosomal_bL9_bac/chp"/>
</dbReference>
<dbReference type="InterPro" id="IPR020069">
    <property type="entry name" value="Ribosomal_bL9_C"/>
</dbReference>
<dbReference type="InterPro" id="IPR036791">
    <property type="entry name" value="Ribosomal_bL9_C_sf"/>
</dbReference>
<dbReference type="InterPro" id="IPR020070">
    <property type="entry name" value="Ribosomal_bL9_N"/>
</dbReference>
<dbReference type="InterPro" id="IPR036935">
    <property type="entry name" value="Ribosomal_bL9_N_sf"/>
</dbReference>
<dbReference type="NCBIfam" id="TIGR00158">
    <property type="entry name" value="L9"/>
    <property type="match status" value="1"/>
</dbReference>
<dbReference type="PANTHER" id="PTHR21368">
    <property type="entry name" value="50S RIBOSOMAL PROTEIN L9"/>
    <property type="match status" value="1"/>
</dbReference>
<dbReference type="Pfam" id="PF03948">
    <property type="entry name" value="Ribosomal_L9_C"/>
    <property type="match status" value="1"/>
</dbReference>
<dbReference type="Pfam" id="PF01281">
    <property type="entry name" value="Ribosomal_L9_N"/>
    <property type="match status" value="1"/>
</dbReference>
<dbReference type="SUPFAM" id="SSF55658">
    <property type="entry name" value="L9 N-domain-like"/>
    <property type="match status" value="1"/>
</dbReference>
<dbReference type="SUPFAM" id="SSF55653">
    <property type="entry name" value="Ribosomal protein L9 C-domain"/>
    <property type="match status" value="1"/>
</dbReference>
<dbReference type="PROSITE" id="PS00651">
    <property type="entry name" value="RIBOSOMAL_L9"/>
    <property type="match status" value="1"/>
</dbReference>
<feature type="chain" id="PRO_1000081494" description="Large ribosomal subunit protein bL9">
    <location>
        <begin position="1"/>
        <end position="150"/>
    </location>
</feature>
<accession>A9WVL2</accession>
<keyword id="KW-1185">Reference proteome</keyword>
<keyword id="KW-0687">Ribonucleoprotein</keyword>
<keyword id="KW-0689">Ribosomal protein</keyword>
<keyword id="KW-0694">RNA-binding</keyword>
<keyword id="KW-0699">rRNA-binding</keyword>
<gene>
    <name evidence="1" type="primary">rplI</name>
    <name type="ordered locus">RSal33209_3524</name>
</gene>
<protein>
    <recommendedName>
        <fullName evidence="1">Large ribosomal subunit protein bL9</fullName>
    </recommendedName>
    <alternativeName>
        <fullName evidence="2">50S ribosomal protein L9</fullName>
    </alternativeName>
</protein>
<evidence type="ECO:0000255" key="1">
    <source>
        <dbReference type="HAMAP-Rule" id="MF_00503"/>
    </source>
</evidence>
<evidence type="ECO:0000305" key="2"/>
<sequence length="150" mass="15783">MAKIILTHEVTGLGAAGDVVEVKNGYARNYLLPRGFALTWTKGGEKQVESIKAARAAREHASVEAAQAQAAKLSSTPVRLEVKAGDSGRLFGTVKAEDVAKAVEAAGLGSIDKRKVEIPAHIKSVGKYQANVRLHEDVSAVIDLNVVAGK</sequence>
<comment type="function">
    <text evidence="1">Binds to the 23S rRNA.</text>
</comment>
<comment type="similarity">
    <text evidence="1">Belongs to the bacterial ribosomal protein bL9 family.</text>
</comment>
<name>RL9_RENSM</name>